<feature type="chain" id="PRO_0000038838" description="Protease">
    <location>
        <begin position="1"/>
        <end position="195"/>
    </location>
</feature>
<feature type="chain" id="PRO_0000038839" description="Reverse transcriptase/ribonuclease H">
    <location>
        <begin position="196"/>
        <end position="914"/>
    </location>
</feature>
<feature type="chain" id="PRO_0000038840" description="Integrase">
    <location>
        <begin position="915"/>
        <end position="1146"/>
    </location>
</feature>
<feature type="domain" description="Peptidase A2" evidence="2">
    <location>
        <begin position="100"/>
        <end position="174"/>
    </location>
</feature>
<feature type="domain" description="Reverse transcriptase" evidence="3">
    <location>
        <begin position="230"/>
        <end position="419"/>
    </location>
</feature>
<feature type="domain" description="RNase H type-1" evidence="4">
    <location>
        <begin position="617"/>
        <end position="740"/>
    </location>
</feature>
<feature type="domain" description="Integrase catalytic" evidence="6">
    <location>
        <begin position="921"/>
        <end position="1078"/>
    </location>
</feature>
<feature type="zinc finger region" description="Integrase-type" evidence="5">
    <location>
        <begin position="878"/>
        <end position="919"/>
    </location>
</feature>
<feature type="DNA-binding region" description="Integrase-type" evidence="7">
    <location>
        <begin position="1096"/>
        <end position="1144"/>
    </location>
</feature>
<feature type="region of interest" description="Disordered" evidence="9">
    <location>
        <begin position="13"/>
        <end position="77"/>
    </location>
</feature>
<feature type="compositionally biased region" description="Polar residues" evidence="9">
    <location>
        <begin position="29"/>
        <end position="41"/>
    </location>
</feature>
<feature type="compositionally biased region" description="Basic and acidic residues" evidence="9">
    <location>
        <begin position="45"/>
        <end position="59"/>
    </location>
</feature>
<feature type="compositionally biased region" description="Polar residues" evidence="9">
    <location>
        <begin position="66"/>
        <end position="76"/>
    </location>
</feature>
<feature type="active site" evidence="8">
    <location>
        <position position="105"/>
    </location>
</feature>
<feature type="binding site" evidence="5">
    <location>
        <position position="887"/>
    </location>
    <ligand>
        <name>Zn(2+)</name>
        <dbReference type="ChEBI" id="CHEBI:29105"/>
    </ligand>
</feature>
<feature type="binding site" evidence="5">
    <location>
        <position position="891"/>
    </location>
    <ligand>
        <name>Zn(2+)</name>
        <dbReference type="ChEBI" id="CHEBI:29105"/>
    </ligand>
</feature>
<feature type="binding site" evidence="5">
    <location>
        <position position="915"/>
    </location>
    <ligand>
        <name>Zn(2+)</name>
        <dbReference type="ChEBI" id="CHEBI:29105"/>
    </ligand>
</feature>
<feature type="binding site" evidence="5">
    <location>
        <position position="918"/>
    </location>
    <ligand>
        <name>Zn(2+)</name>
        <dbReference type="ChEBI" id="CHEBI:29105"/>
    </ligand>
</feature>
<feature type="strand" evidence="11">
    <location>
        <begin position="744"/>
        <end position="746"/>
    </location>
</feature>
<feature type="strand" evidence="11">
    <location>
        <begin position="748"/>
        <end position="750"/>
    </location>
</feature>
<feature type="strand" evidence="11">
    <location>
        <begin position="758"/>
        <end position="763"/>
    </location>
</feature>
<feature type="strand" evidence="11">
    <location>
        <begin position="768"/>
        <end position="770"/>
    </location>
</feature>
<feature type="strand" evidence="11">
    <location>
        <begin position="775"/>
        <end position="779"/>
    </location>
</feature>
<feature type="strand" evidence="11">
    <location>
        <begin position="783"/>
        <end position="785"/>
    </location>
</feature>
<feature type="strand" evidence="11">
    <location>
        <begin position="790"/>
        <end position="795"/>
    </location>
</feature>
<feature type="helix" evidence="11">
    <location>
        <begin position="798"/>
        <end position="802"/>
    </location>
</feature>
<feature type="strand" evidence="11">
    <location>
        <begin position="805"/>
        <end position="808"/>
    </location>
</feature>
<feature type="strand" evidence="11">
    <location>
        <begin position="811"/>
        <end position="813"/>
    </location>
</feature>
<feature type="strand" evidence="11">
    <location>
        <begin position="821"/>
        <end position="826"/>
    </location>
</feature>
<feature type="strand" evidence="11">
    <location>
        <begin position="828"/>
        <end position="830"/>
    </location>
</feature>
<feature type="strand" evidence="11">
    <location>
        <begin position="832"/>
        <end position="834"/>
    </location>
</feature>
<feature type="strand" evidence="11">
    <location>
        <begin position="839"/>
        <end position="847"/>
    </location>
</feature>
<dbReference type="EC" id="3.4.23.-"/>
<dbReference type="EC" id="2.7.7.49"/>
<dbReference type="EC" id="3.1.26.13"/>
<dbReference type="EC" id="3.1.13.2"/>
<dbReference type="EC" id="2.7.7.-" evidence="1"/>
<dbReference type="EC" id="3.1.-.-" evidence="1"/>
<dbReference type="EMBL" id="M16575">
    <property type="protein sequence ID" value="AAB59862.1"/>
    <property type="status" value="ALT_INIT"/>
    <property type="molecule type" value="Genomic_RNA"/>
</dbReference>
<dbReference type="PIR" id="B27842">
    <property type="entry name" value="GNLJEW"/>
</dbReference>
<dbReference type="PDB" id="1DUC">
    <property type="method" value="X-ray"/>
    <property type="resolution" value="2.05 A"/>
    <property type="chains" value="A=742-875"/>
</dbReference>
<dbReference type="PDB" id="1DUN">
    <property type="method" value="X-ray"/>
    <property type="resolution" value="1.90 A"/>
    <property type="chains" value="A=742-875"/>
</dbReference>
<dbReference type="PDBsum" id="1DUC"/>
<dbReference type="PDBsum" id="1DUN"/>
<dbReference type="SMR" id="P11204"/>
<dbReference type="MEROPS" id="A02.004"/>
<dbReference type="EvolutionaryTrace" id="P11204"/>
<dbReference type="GO" id="GO:0004190">
    <property type="term" value="F:aspartic-type endopeptidase activity"/>
    <property type="evidence" value="ECO:0007669"/>
    <property type="project" value="UniProtKB-KW"/>
</dbReference>
<dbReference type="GO" id="GO:0003677">
    <property type="term" value="F:DNA binding"/>
    <property type="evidence" value="ECO:0007669"/>
    <property type="project" value="UniProtKB-KW"/>
</dbReference>
<dbReference type="GO" id="GO:0004170">
    <property type="term" value="F:dUTP diphosphatase activity"/>
    <property type="evidence" value="ECO:0000314"/>
    <property type="project" value="CAFA"/>
</dbReference>
<dbReference type="GO" id="GO:0004533">
    <property type="term" value="F:exoribonuclease H activity"/>
    <property type="evidence" value="ECO:0007669"/>
    <property type="project" value="UniProtKB-EC"/>
</dbReference>
<dbReference type="GO" id="GO:0000287">
    <property type="term" value="F:magnesium ion binding"/>
    <property type="evidence" value="ECO:0000314"/>
    <property type="project" value="CAFA"/>
</dbReference>
<dbReference type="GO" id="GO:0035613">
    <property type="term" value="F:RNA stem-loop binding"/>
    <property type="evidence" value="ECO:0007669"/>
    <property type="project" value="TreeGrafter"/>
</dbReference>
<dbReference type="GO" id="GO:0003964">
    <property type="term" value="F:RNA-directed DNA polymerase activity"/>
    <property type="evidence" value="ECO:0007669"/>
    <property type="project" value="UniProtKB-KW"/>
</dbReference>
<dbReference type="GO" id="GO:0004523">
    <property type="term" value="F:RNA-DNA hybrid ribonuclease activity"/>
    <property type="evidence" value="ECO:0007669"/>
    <property type="project" value="InterPro"/>
</dbReference>
<dbReference type="GO" id="GO:0002134">
    <property type="term" value="F:UTP binding"/>
    <property type="evidence" value="ECO:0000314"/>
    <property type="project" value="CAFA"/>
</dbReference>
<dbReference type="GO" id="GO:0008270">
    <property type="term" value="F:zinc ion binding"/>
    <property type="evidence" value="ECO:0007669"/>
    <property type="project" value="UniProtKB-KW"/>
</dbReference>
<dbReference type="GO" id="GO:0015074">
    <property type="term" value="P:DNA integration"/>
    <property type="evidence" value="ECO:0007669"/>
    <property type="project" value="UniProtKB-KW"/>
</dbReference>
<dbReference type="GO" id="GO:0006310">
    <property type="term" value="P:DNA recombination"/>
    <property type="evidence" value="ECO:0007669"/>
    <property type="project" value="UniProtKB-KW"/>
</dbReference>
<dbReference type="GO" id="GO:0006226">
    <property type="term" value="P:dUMP biosynthetic process"/>
    <property type="evidence" value="ECO:0000314"/>
    <property type="project" value="CAFA"/>
</dbReference>
<dbReference type="GO" id="GO:0046081">
    <property type="term" value="P:dUTP catabolic process"/>
    <property type="evidence" value="ECO:0000314"/>
    <property type="project" value="CAFA"/>
</dbReference>
<dbReference type="GO" id="GO:0075713">
    <property type="term" value="P:establishment of integrated proviral latency"/>
    <property type="evidence" value="ECO:0007669"/>
    <property type="project" value="UniProtKB-KW"/>
</dbReference>
<dbReference type="GO" id="GO:0006508">
    <property type="term" value="P:proteolysis"/>
    <property type="evidence" value="ECO:0007669"/>
    <property type="project" value="UniProtKB-KW"/>
</dbReference>
<dbReference type="GO" id="GO:0046718">
    <property type="term" value="P:symbiont entry into host cell"/>
    <property type="evidence" value="ECO:0007669"/>
    <property type="project" value="UniProtKB-KW"/>
</dbReference>
<dbReference type="GO" id="GO:0044826">
    <property type="term" value="P:viral genome integration into host DNA"/>
    <property type="evidence" value="ECO:0007669"/>
    <property type="project" value="UniProtKB-KW"/>
</dbReference>
<dbReference type="CDD" id="cd09276">
    <property type="entry name" value="Rnase_HI_RT_non_LTR"/>
    <property type="match status" value="1"/>
</dbReference>
<dbReference type="CDD" id="cd07557">
    <property type="entry name" value="trimeric_dUTPase"/>
    <property type="match status" value="1"/>
</dbReference>
<dbReference type="FunFam" id="3.30.420.10:FF:000212">
    <property type="entry name" value="Pol polyprotein"/>
    <property type="match status" value="1"/>
</dbReference>
<dbReference type="Gene3D" id="1.10.10.200">
    <property type="match status" value="1"/>
</dbReference>
<dbReference type="Gene3D" id="2.70.40.10">
    <property type="match status" value="1"/>
</dbReference>
<dbReference type="Gene3D" id="3.30.70.270">
    <property type="match status" value="3"/>
</dbReference>
<dbReference type="Gene3D" id="2.40.70.10">
    <property type="entry name" value="Acid Proteases"/>
    <property type="match status" value="1"/>
</dbReference>
<dbReference type="Gene3D" id="3.10.10.10">
    <property type="entry name" value="HIV Type 1 Reverse Transcriptase, subunit A, domain 1"/>
    <property type="match status" value="1"/>
</dbReference>
<dbReference type="Gene3D" id="2.30.30.10">
    <property type="entry name" value="Integrase, C-terminal domain superfamily, retroviral"/>
    <property type="match status" value="1"/>
</dbReference>
<dbReference type="Gene3D" id="3.30.420.10">
    <property type="entry name" value="Ribonuclease H-like superfamily/Ribonuclease H"/>
    <property type="match status" value="2"/>
</dbReference>
<dbReference type="InterPro" id="IPR001969">
    <property type="entry name" value="Aspartic_peptidase_AS"/>
</dbReference>
<dbReference type="InterPro" id="IPR043502">
    <property type="entry name" value="DNA/RNA_pol_sf"/>
</dbReference>
<dbReference type="InterPro" id="IPR029054">
    <property type="entry name" value="dUTPase-like"/>
</dbReference>
<dbReference type="InterPro" id="IPR036157">
    <property type="entry name" value="dUTPase-like_sf"/>
</dbReference>
<dbReference type="InterPro" id="IPR033704">
    <property type="entry name" value="dUTPase_trimeric"/>
</dbReference>
<dbReference type="InterPro" id="IPR017856">
    <property type="entry name" value="Integrase-like_N"/>
</dbReference>
<dbReference type="InterPro" id="IPR036862">
    <property type="entry name" value="Integrase_C_dom_sf_retrovir"/>
</dbReference>
<dbReference type="InterPro" id="IPR001037">
    <property type="entry name" value="Integrase_C_retrovir"/>
</dbReference>
<dbReference type="InterPro" id="IPR001584">
    <property type="entry name" value="Integrase_cat-core"/>
</dbReference>
<dbReference type="InterPro" id="IPR003308">
    <property type="entry name" value="Integrase_Zn-bd_dom_N"/>
</dbReference>
<dbReference type="InterPro" id="IPR001995">
    <property type="entry name" value="Peptidase_A2_cat"/>
</dbReference>
<dbReference type="InterPro" id="IPR021109">
    <property type="entry name" value="Peptidase_aspartic_dom_sf"/>
</dbReference>
<dbReference type="InterPro" id="IPR018061">
    <property type="entry name" value="Retropepsins"/>
</dbReference>
<dbReference type="InterPro" id="IPR043128">
    <property type="entry name" value="Rev_trsase/Diguanyl_cyclase"/>
</dbReference>
<dbReference type="InterPro" id="IPR012337">
    <property type="entry name" value="RNaseH-like_sf"/>
</dbReference>
<dbReference type="InterPro" id="IPR002156">
    <property type="entry name" value="RNaseH_domain"/>
</dbReference>
<dbReference type="InterPro" id="IPR036397">
    <property type="entry name" value="RNaseH_sf"/>
</dbReference>
<dbReference type="InterPro" id="IPR000477">
    <property type="entry name" value="RT_dom"/>
</dbReference>
<dbReference type="InterPro" id="IPR010659">
    <property type="entry name" value="RVT_connect"/>
</dbReference>
<dbReference type="InterPro" id="IPR010661">
    <property type="entry name" value="RVT_thumb"/>
</dbReference>
<dbReference type="PANTHER" id="PTHR41694">
    <property type="entry name" value="ENDOGENOUS RETROVIRUS GROUP K MEMBER POL PROTEIN"/>
    <property type="match status" value="1"/>
</dbReference>
<dbReference type="PANTHER" id="PTHR41694:SF3">
    <property type="entry name" value="RNA-DIRECTED DNA POLYMERASE-RELATED"/>
    <property type="match status" value="1"/>
</dbReference>
<dbReference type="Pfam" id="PF00692">
    <property type="entry name" value="dUTPase"/>
    <property type="match status" value="1"/>
</dbReference>
<dbReference type="Pfam" id="PF00552">
    <property type="entry name" value="IN_DBD_C"/>
    <property type="match status" value="1"/>
</dbReference>
<dbReference type="Pfam" id="PF02022">
    <property type="entry name" value="Integrase_Zn"/>
    <property type="match status" value="1"/>
</dbReference>
<dbReference type="Pfam" id="PF00075">
    <property type="entry name" value="RNase_H"/>
    <property type="match status" value="1"/>
</dbReference>
<dbReference type="Pfam" id="PF00665">
    <property type="entry name" value="rve"/>
    <property type="match status" value="1"/>
</dbReference>
<dbReference type="Pfam" id="PF00077">
    <property type="entry name" value="RVP"/>
    <property type="match status" value="1"/>
</dbReference>
<dbReference type="Pfam" id="PF00078">
    <property type="entry name" value="RVT_1"/>
    <property type="match status" value="1"/>
</dbReference>
<dbReference type="Pfam" id="PF06815">
    <property type="entry name" value="RVT_connect"/>
    <property type="match status" value="1"/>
</dbReference>
<dbReference type="Pfam" id="PF06817">
    <property type="entry name" value="RVT_thumb"/>
    <property type="match status" value="1"/>
</dbReference>
<dbReference type="SUPFAM" id="SSF50630">
    <property type="entry name" value="Acid proteases"/>
    <property type="match status" value="1"/>
</dbReference>
<dbReference type="SUPFAM" id="SSF50122">
    <property type="entry name" value="DNA-binding domain of retroviral integrase"/>
    <property type="match status" value="1"/>
</dbReference>
<dbReference type="SUPFAM" id="SSF56672">
    <property type="entry name" value="DNA/RNA polymerases"/>
    <property type="match status" value="1"/>
</dbReference>
<dbReference type="SUPFAM" id="SSF51283">
    <property type="entry name" value="dUTPase-like"/>
    <property type="match status" value="1"/>
</dbReference>
<dbReference type="SUPFAM" id="SSF46919">
    <property type="entry name" value="N-terminal Zn binding domain of HIV integrase"/>
    <property type="match status" value="1"/>
</dbReference>
<dbReference type="SUPFAM" id="SSF53098">
    <property type="entry name" value="Ribonuclease H-like"/>
    <property type="match status" value="2"/>
</dbReference>
<dbReference type="PROSITE" id="PS50175">
    <property type="entry name" value="ASP_PROT_RETROV"/>
    <property type="match status" value="1"/>
</dbReference>
<dbReference type="PROSITE" id="PS00141">
    <property type="entry name" value="ASP_PROTEASE"/>
    <property type="match status" value="1"/>
</dbReference>
<dbReference type="PROSITE" id="PS50994">
    <property type="entry name" value="INTEGRASE"/>
    <property type="match status" value="1"/>
</dbReference>
<dbReference type="PROSITE" id="PS51027">
    <property type="entry name" value="INTEGRASE_DBD"/>
    <property type="match status" value="1"/>
</dbReference>
<dbReference type="PROSITE" id="PS50879">
    <property type="entry name" value="RNASE_H_1"/>
    <property type="match status" value="1"/>
</dbReference>
<dbReference type="PROSITE" id="PS50878">
    <property type="entry name" value="RT_POL"/>
    <property type="match status" value="1"/>
</dbReference>
<dbReference type="PROSITE" id="PS50876">
    <property type="entry name" value="ZF_INTEGRASE"/>
    <property type="match status" value="1"/>
</dbReference>
<evidence type="ECO:0000250" key="1">
    <source>
        <dbReference type="UniProtKB" id="P04585"/>
    </source>
</evidence>
<evidence type="ECO:0000255" key="2">
    <source>
        <dbReference type="PROSITE-ProRule" id="PRU00275"/>
    </source>
</evidence>
<evidence type="ECO:0000255" key="3">
    <source>
        <dbReference type="PROSITE-ProRule" id="PRU00405"/>
    </source>
</evidence>
<evidence type="ECO:0000255" key="4">
    <source>
        <dbReference type="PROSITE-ProRule" id="PRU00408"/>
    </source>
</evidence>
<evidence type="ECO:0000255" key="5">
    <source>
        <dbReference type="PROSITE-ProRule" id="PRU00450"/>
    </source>
</evidence>
<evidence type="ECO:0000255" key="6">
    <source>
        <dbReference type="PROSITE-ProRule" id="PRU00457"/>
    </source>
</evidence>
<evidence type="ECO:0000255" key="7">
    <source>
        <dbReference type="PROSITE-ProRule" id="PRU00506"/>
    </source>
</evidence>
<evidence type="ECO:0000255" key="8">
    <source>
        <dbReference type="PROSITE-ProRule" id="PRU10094"/>
    </source>
</evidence>
<evidence type="ECO:0000256" key="9">
    <source>
        <dbReference type="SAM" id="MobiDB-lite"/>
    </source>
</evidence>
<evidence type="ECO:0000305" key="10"/>
<evidence type="ECO:0007829" key="11">
    <source>
        <dbReference type="PDB" id="1DUN"/>
    </source>
</evidence>
<protein>
    <recommendedName>
        <fullName>Pol polyprotein</fullName>
    </recommendedName>
    <component>
        <recommendedName>
            <fullName>Protease</fullName>
        </recommendedName>
        <alternativeName>
            <fullName>Retropepsin</fullName>
            <ecNumber>3.4.23.-</ecNumber>
        </alternativeName>
    </component>
    <component>
        <recommendedName>
            <fullName>Reverse transcriptase/ribonuclease H</fullName>
            <shortName>RT</shortName>
            <ecNumber>2.7.7.49</ecNumber>
            <ecNumber>3.1.26.13</ecNumber>
        </recommendedName>
        <alternativeName>
            <fullName>Exoribonuclease H</fullName>
            <ecNumber>3.1.13.2</ecNumber>
        </alternativeName>
    </component>
    <component>
        <recommendedName>
            <fullName>Integrase</fullName>
            <shortName>IN</shortName>
            <ecNumber evidence="1">2.7.7.-</ecNumber>
            <ecNumber evidence="1">3.1.-.-</ecNumber>
        </recommendedName>
    </component>
</protein>
<gene>
    <name type="primary">pol</name>
</gene>
<proteinExistence type="evidence at protein level"/>
<organism>
    <name type="scientific">Equine infectious anemia virus (isolate 1369)</name>
    <name type="common">EIAV</name>
    <dbReference type="NCBI Taxonomy" id="11670"/>
    <lineage>
        <taxon>Viruses</taxon>
        <taxon>Riboviria</taxon>
        <taxon>Pararnavirae</taxon>
        <taxon>Artverviricota</taxon>
        <taxon>Revtraviricetes</taxon>
        <taxon>Ortervirales</taxon>
        <taxon>Retroviridae</taxon>
        <taxon>Orthoretrovirinae</taxon>
        <taxon>Lentivirus</taxon>
        <taxon>Equine infectious anemia virus</taxon>
    </lineage>
</organism>
<organismHost>
    <name type="scientific">Equus asinus</name>
    <name type="common">Donkey</name>
    <name type="synonym">Equus africanus asinus</name>
    <dbReference type="NCBI Taxonomy" id="9793"/>
</organismHost>
<organismHost>
    <name type="scientific">Equus caballus</name>
    <name type="common">Horse</name>
    <dbReference type="NCBI Taxonomy" id="9796"/>
</organismHost>
<reference key="1">
    <citation type="journal article" date="1987" name="Virology">
        <title>Nucleotide sequence analysis of equine infectious anemia virus proviral DNA.</title>
        <authorList>
            <person name="Kawakami T."/>
            <person name="Sherman L."/>
            <person name="Dahlberg J."/>
            <person name="Gazit A."/>
            <person name="Yaniv A."/>
            <person name="Tronick S.R."/>
            <person name="Aaronson S.A."/>
        </authorList>
    </citation>
    <scope>NUCLEOTIDE SEQUENCE [GENOMIC RNA]</scope>
</reference>
<keyword id="KW-0002">3D-structure</keyword>
<keyword id="KW-0064">Aspartyl protease</keyword>
<keyword id="KW-0165">Cleavage on pair of basic residues</keyword>
<keyword id="KW-0229">DNA integration</keyword>
<keyword id="KW-0233">DNA recombination</keyword>
<keyword id="KW-0238">DNA-binding</keyword>
<keyword id="KW-0255">Endonuclease</keyword>
<keyword id="KW-0378">Hydrolase</keyword>
<keyword id="KW-0479">Metal-binding</keyword>
<keyword id="KW-0511">Multifunctional enzyme</keyword>
<keyword id="KW-0540">Nuclease</keyword>
<keyword id="KW-0548">Nucleotidyltransferase</keyword>
<keyword id="KW-0645">Protease</keyword>
<keyword id="KW-0695">RNA-directed DNA polymerase</keyword>
<keyword id="KW-0808">Transferase</keyword>
<keyword id="KW-1179">Viral genome integration</keyword>
<keyword id="KW-1160">Virus entry into host cell</keyword>
<keyword id="KW-0862">Zinc</keyword>
<keyword id="KW-0863">Zinc-finger</keyword>
<name>POL_EIAV9</name>
<accession>P11204</accession>
<comment type="function">
    <text>During replicative cycle of retroviruses, the reverse-transcribed viral DNA is integrated into the host chromosome by the viral integrase enzyme. RNase H activity is associated with the reverse transcriptase.</text>
</comment>
<comment type="catalytic activity">
    <reaction>
        <text>Endohydrolysis of RNA in RNA/DNA hybrids. Three different cleavage modes: 1. sequence-specific internal cleavage of RNA. Human immunodeficiency virus type 1 and Moloney murine leukemia virus enzymes prefer to cleave the RNA strand one nucleotide away from the RNA-DNA junction. 2. RNA 5'-end directed cleavage 13-19 nucleotides from the RNA end. 3. DNA 3'-end directed cleavage 15-20 nucleotides away from the primer terminus.</text>
        <dbReference type="EC" id="3.1.26.13"/>
    </reaction>
</comment>
<comment type="catalytic activity">
    <reaction>
        <text>3'-end directed exonucleolytic cleavage of viral RNA-DNA hybrid.</text>
        <dbReference type="EC" id="3.1.13.2"/>
    </reaction>
</comment>
<comment type="catalytic activity">
    <reaction evidence="3">
        <text>DNA(n) + a 2'-deoxyribonucleoside 5'-triphosphate = DNA(n+1) + diphosphate</text>
        <dbReference type="Rhea" id="RHEA:22508"/>
        <dbReference type="Rhea" id="RHEA-COMP:17339"/>
        <dbReference type="Rhea" id="RHEA-COMP:17340"/>
        <dbReference type="ChEBI" id="CHEBI:33019"/>
        <dbReference type="ChEBI" id="CHEBI:61560"/>
        <dbReference type="ChEBI" id="CHEBI:173112"/>
        <dbReference type="EC" id="2.7.7.49"/>
    </reaction>
</comment>
<comment type="PTM">
    <text>Specific enzymatic cleavages in vivo yield mature proteins.</text>
</comment>
<comment type="similarity">
    <text evidence="10">Belongs to the retroviral Pol polyprotein family.</text>
</comment>
<comment type="sequence caution" evidence="10">
    <conflict type="erroneous initiation">
        <sequence resource="EMBL-CDS" id="AAB59862"/>
    </conflict>
</comment>
<sequence>TAWTFLKAMQKCSKKREARGSREAPETNFPDTTEESAQQICCTRDSSDSKSVPRSERNKKGIQCQGEGSSRGSQPGQFVGVTYNLEKRPTTIVLINDTPLNVLLDTGADTSVLTTAHYNRLKYRGRKYQGTGIIGVGGNVETFSTPVTIKKKGRHIKTRMLVADIPVTILGRDILQDLGAKLVLAQLSKEIKFRKIELKEGTMGPKIPQWPLTKEKLEGAKEIVQRLLSEGKISEASDNNPYNSPIFVIKKRSGKWRLLQDLRELNKTVQVGTEISRGLPHPGGLIKCKHMTVLDIGDAYFTIPLDPEFRPYTAFTIPSINHQEPDKRYVWNCLPQGFVLSPYIYQKTLQEILQPFRERYPEVQLYQYMDDLFVGSNGSKKQHKELIIELRAILLEEGFETPDDKLQEVPPYSWLGYQLCPENWKVQKMQLDMVKNPTLNDVQKLMGNITWMSSGVPGLTVKHIAATTKGCLELNQKVIWTEEAQKELEENNEKIKNAQGLQYYNPEEEMLCEVEITKNYEATYVIKQSQGILWAGKKIMKANKGWSTVKNLMLLLQHVATESITRVGKCPTFKVPFTKEQVMWEMQKGWYYSWLPEIVYTHQVVHDDWRMKLVEEPTSGITIYTDGGKQNGEGIAAYVTSNGRTKQKRLGPVTHQVAERMAIQMALEDTRDKQVNIVTDSYYCWKNITEGLGLEGPQSPWWPIIQNIREKEIVYFAWVPGHKGICGNQLADEAAKIKEEIMLAYQGTQIKEKRDEDAGFDLCVPYDIMIPVSDTKIIPTDVKIQVPPNSFGWVTGKSSMAKQGLLINGGIIDEGYTGEIQVICTNIGKSNIKLIEGQKFAQLIILQHHSNSRQPWDENKISQRGDKGFGSTGVFWVENIQEAQDEHENWHTSPKILARNYKIPLTVAKQITQECPHCTKQGSGPAGCVMRSPNHWQADCTHLDNKIILTFVESNSGYIHATLLSKENALCTSLAILEWARLFSPKSLHTDNGTNFVAEPVVNLLKFLKIAHTTGIPYHPESQGIVERANRTLKEKIQSHRDNTQTLEAALQLALITCNKGRESMGGQTPWEVFITNQAQVIHEKLLLQQAQSSKKFCFYKIPGEHDWKGPTRVLWKGDGAVVVNDEGKGIIAVPLTRTKLLIKPN</sequence>